<gene>
    <name type="primary">CEG1</name>
    <name type="ordered locus">KLLA0B02200g</name>
</gene>
<organism>
    <name type="scientific">Kluyveromyces lactis (strain ATCC 8585 / CBS 2359 / DSM 70799 / NBRC 1267 / NRRL Y-1140 / WM37)</name>
    <name type="common">Yeast</name>
    <name type="synonym">Candida sphaerica</name>
    <dbReference type="NCBI Taxonomy" id="284590"/>
    <lineage>
        <taxon>Eukaryota</taxon>
        <taxon>Fungi</taxon>
        <taxon>Dikarya</taxon>
        <taxon>Ascomycota</taxon>
        <taxon>Saccharomycotina</taxon>
        <taxon>Saccharomycetes</taxon>
        <taxon>Saccharomycetales</taxon>
        <taxon>Saccharomycetaceae</taxon>
        <taxon>Kluyveromyces</taxon>
    </lineage>
</organism>
<name>MCE1_KLULA</name>
<feature type="chain" id="PRO_0000210102" description="mRNA-capping enzyme subunit alpha">
    <location>
        <begin position="1"/>
        <end position="466"/>
    </location>
</feature>
<feature type="region of interest" description="Disordered" evidence="3">
    <location>
        <begin position="408"/>
        <end position="466"/>
    </location>
</feature>
<feature type="compositionally biased region" description="Polar residues" evidence="3">
    <location>
        <begin position="413"/>
        <end position="443"/>
    </location>
</feature>
<feature type="compositionally biased region" description="Acidic residues" evidence="3">
    <location>
        <begin position="448"/>
        <end position="459"/>
    </location>
</feature>
<feature type="active site" description="N6-GMP-lysine intermediate" evidence="1">
    <location>
        <position position="67"/>
    </location>
</feature>
<proteinExistence type="inferred from homology"/>
<accession>Q6CWR0</accession>
<protein>
    <recommendedName>
        <fullName>mRNA-capping enzyme subunit alpha</fullName>
    </recommendedName>
    <alternativeName>
        <fullName>GTP--RNA guanylyltransferase</fullName>
        <shortName>GTase</shortName>
    </alternativeName>
    <alternativeName>
        <fullName>mRNA guanylyltransferase</fullName>
        <ecNumber evidence="2">2.7.7.50</ecNumber>
    </alternativeName>
</protein>
<reference key="1">
    <citation type="journal article" date="2004" name="Nature">
        <title>Genome evolution in yeasts.</title>
        <authorList>
            <person name="Dujon B."/>
            <person name="Sherman D."/>
            <person name="Fischer G."/>
            <person name="Durrens P."/>
            <person name="Casaregola S."/>
            <person name="Lafontaine I."/>
            <person name="de Montigny J."/>
            <person name="Marck C."/>
            <person name="Neuveglise C."/>
            <person name="Talla E."/>
            <person name="Goffard N."/>
            <person name="Frangeul L."/>
            <person name="Aigle M."/>
            <person name="Anthouard V."/>
            <person name="Babour A."/>
            <person name="Barbe V."/>
            <person name="Barnay S."/>
            <person name="Blanchin S."/>
            <person name="Beckerich J.-M."/>
            <person name="Beyne E."/>
            <person name="Bleykasten C."/>
            <person name="Boisrame A."/>
            <person name="Boyer J."/>
            <person name="Cattolico L."/>
            <person name="Confanioleri F."/>
            <person name="de Daruvar A."/>
            <person name="Despons L."/>
            <person name="Fabre E."/>
            <person name="Fairhead C."/>
            <person name="Ferry-Dumazet H."/>
            <person name="Groppi A."/>
            <person name="Hantraye F."/>
            <person name="Hennequin C."/>
            <person name="Jauniaux N."/>
            <person name="Joyet P."/>
            <person name="Kachouri R."/>
            <person name="Kerrest A."/>
            <person name="Koszul R."/>
            <person name="Lemaire M."/>
            <person name="Lesur I."/>
            <person name="Ma L."/>
            <person name="Muller H."/>
            <person name="Nicaud J.-M."/>
            <person name="Nikolski M."/>
            <person name="Oztas S."/>
            <person name="Ozier-Kalogeropoulos O."/>
            <person name="Pellenz S."/>
            <person name="Potier S."/>
            <person name="Richard G.-F."/>
            <person name="Straub M.-L."/>
            <person name="Suleau A."/>
            <person name="Swennen D."/>
            <person name="Tekaia F."/>
            <person name="Wesolowski-Louvel M."/>
            <person name="Westhof E."/>
            <person name="Wirth B."/>
            <person name="Zeniou-Meyer M."/>
            <person name="Zivanovic Y."/>
            <person name="Bolotin-Fukuhara M."/>
            <person name="Thierry A."/>
            <person name="Bouchier C."/>
            <person name="Caudron B."/>
            <person name="Scarpelli C."/>
            <person name="Gaillardin C."/>
            <person name="Weissenbach J."/>
            <person name="Wincker P."/>
            <person name="Souciet J.-L."/>
        </authorList>
    </citation>
    <scope>NUCLEOTIDE SEQUENCE [LARGE SCALE GENOMIC DNA]</scope>
    <source>
        <strain>ATCC 8585 / CBS 2359 / DSM 70799 / NBRC 1267 / NRRL Y-1140 / WM37</strain>
    </source>
</reference>
<keyword id="KW-0342">GTP-binding</keyword>
<keyword id="KW-0506">mRNA capping</keyword>
<keyword id="KW-0507">mRNA processing</keyword>
<keyword id="KW-0547">Nucleotide-binding</keyword>
<keyword id="KW-0548">Nucleotidyltransferase</keyword>
<keyword id="KW-0539">Nucleus</keyword>
<keyword id="KW-1185">Reference proteome</keyword>
<keyword id="KW-0808">Transferase</keyword>
<evidence type="ECO:0000250" key="1"/>
<evidence type="ECO:0000250" key="2">
    <source>
        <dbReference type="UniProtKB" id="Q01159"/>
    </source>
</evidence>
<evidence type="ECO:0000256" key="3">
    <source>
        <dbReference type="SAM" id="MobiDB-lite"/>
    </source>
</evidence>
<evidence type="ECO:0000305" key="4"/>
<sequence>MDNNRVAPEIPGLRQPGQITNDIRMLMCKLLNSAKPANTFPGSQPVSFHLADIEEKLLAQDYYVCEKTDGLRALMLIMVNPVTKEQGCFMIDRENNYYMVNGFRFPCLPRANKKELLETLQDGTLIDGELVMQTNPVTKLKELRYLMFDCLAVNGRSLVQSPTSSRLAHLGKEFFKPYYDLRSYFPDRCSTFPFKISMKHMNFSYDLAKVAKTLDSLPHVSDGLIFTPVQAAYHIGGKDSYLLKWKPEVENTVDFKLIIEPPVVEDKSLPKSDKNRFYYNYDVKPLFHLYVWQGGNDVNNRIQDFEQPFTKSDLELLERTYRKFAEIEIDDKQWNELKAMEEPLNGRIVECSKDQESGAWKLLRFRDDKLNGNHVSVVQKVLESIGDSVSLDDLEQVVDEMRSRWKEREQGLKNAQKQFNHQASARSSLSQQHSTEPEQSQDQPKYVDDDDDNWSDDEPDTKRQKI</sequence>
<comment type="function">
    <text evidence="2">Second step of mRNA capping. Transfer of the GMP moiety of GTP to the 5'-end of RNA via an enzyme-GMP covalent reaction intermediate.</text>
</comment>
<comment type="catalytic activity">
    <reaction evidence="2">
        <text>a 5'-end diphospho-ribonucleoside in mRNA + GTP + H(+) = a 5'-end (5'-triphosphoguanosine)-ribonucleoside in mRNA + diphosphate</text>
        <dbReference type="Rhea" id="RHEA:67012"/>
        <dbReference type="Rhea" id="RHEA-COMP:17165"/>
        <dbReference type="Rhea" id="RHEA-COMP:17166"/>
        <dbReference type="ChEBI" id="CHEBI:15378"/>
        <dbReference type="ChEBI" id="CHEBI:33019"/>
        <dbReference type="ChEBI" id="CHEBI:37565"/>
        <dbReference type="ChEBI" id="CHEBI:167616"/>
        <dbReference type="ChEBI" id="CHEBI:167617"/>
        <dbReference type="EC" id="2.7.7.50"/>
    </reaction>
    <physiologicalReaction direction="left-to-right" evidence="2">
        <dbReference type="Rhea" id="RHEA:67013"/>
    </physiologicalReaction>
</comment>
<comment type="subunit">
    <text evidence="2">Heterodimer. The mRNA-capping enzyme is composed of two separate chains alpha and beta, respectively a mRNA guanylyltransferase and an mRNA 5'-triphosphate monophosphatase.</text>
</comment>
<comment type="subcellular location">
    <subcellularLocation>
        <location evidence="1">Nucleus</location>
    </subcellularLocation>
</comment>
<comment type="similarity">
    <text evidence="4">Belongs to the eukaryotic GTase family.</text>
</comment>
<dbReference type="EC" id="2.7.7.50" evidence="2"/>
<dbReference type="EMBL" id="CR382122">
    <property type="protein sequence ID" value="CAH02022.1"/>
    <property type="molecule type" value="Genomic_DNA"/>
</dbReference>
<dbReference type="RefSeq" id="XP_451629.1">
    <property type="nucleotide sequence ID" value="XM_451629.1"/>
</dbReference>
<dbReference type="SMR" id="Q6CWR0"/>
<dbReference type="FunCoup" id="Q6CWR0">
    <property type="interactions" value="471"/>
</dbReference>
<dbReference type="STRING" id="284590.Q6CWR0"/>
<dbReference type="PaxDb" id="284590-Q6CWR0"/>
<dbReference type="KEGG" id="kla:KLLA0_B02200g"/>
<dbReference type="eggNOG" id="KOG2386">
    <property type="taxonomic scope" value="Eukaryota"/>
</dbReference>
<dbReference type="HOGENOM" id="CLU_021710_0_2_1"/>
<dbReference type="InParanoid" id="Q6CWR0"/>
<dbReference type="OMA" id="KDYYVCE"/>
<dbReference type="Proteomes" id="UP000000598">
    <property type="component" value="Chromosome B"/>
</dbReference>
<dbReference type="GO" id="GO:0031533">
    <property type="term" value="C:mRNA capping enzyme complex"/>
    <property type="evidence" value="ECO:0007669"/>
    <property type="project" value="InterPro"/>
</dbReference>
<dbReference type="GO" id="GO:0005524">
    <property type="term" value="F:ATP binding"/>
    <property type="evidence" value="ECO:0007669"/>
    <property type="project" value="InterPro"/>
</dbReference>
<dbReference type="GO" id="GO:0005525">
    <property type="term" value="F:GTP binding"/>
    <property type="evidence" value="ECO:0007669"/>
    <property type="project" value="UniProtKB-KW"/>
</dbReference>
<dbReference type="GO" id="GO:0004484">
    <property type="term" value="F:mRNA guanylyltransferase activity"/>
    <property type="evidence" value="ECO:0007669"/>
    <property type="project" value="UniProtKB-EC"/>
</dbReference>
<dbReference type="GO" id="GO:0006370">
    <property type="term" value="P:7-methylguanosine mRNA capping"/>
    <property type="evidence" value="ECO:0007669"/>
    <property type="project" value="UniProtKB-KW"/>
</dbReference>
<dbReference type="CDD" id="cd07895">
    <property type="entry name" value="Adenylation_mRNA_capping"/>
    <property type="match status" value="1"/>
</dbReference>
<dbReference type="FunFam" id="2.40.50.140:FF:000253">
    <property type="entry name" value="mRNA-capping enzyme subunit alpha"/>
    <property type="match status" value="1"/>
</dbReference>
<dbReference type="FunFam" id="3.30.470.30:FF:000011">
    <property type="entry name" value="mRNA-capping enzyme subunit alpha"/>
    <property type="match status" value="1"/>
</dbReference>
<dbReference type="Gene3D" id="3.30.470.30">
    <property type="entry name" value="DNA ligase/mRNA capping enzyme"/>
    <property type="match status" value="1"/>
</dbReference>
<dbReference type="Gene3D" id="2.40.50.140">
    <property type="entry name" value="Nucleic acid-binding proteins"/>
    <property type="match status" value="1"/>
</dbReference>
<dbReference type="InterPro" id="IPR001339">
    <property type="entry name" value="mRNA_cap_enzyme_adenylation"/>
</dbReference>
<dbReference type="InterPro" id="IPR017075">
    <property type="entry name" value="mRNA_cap_enzyme_alpha"/>
</dbReference>
<dbReference type="InterPro" id="IPR013846">
    <property type="entry name" value="mRNA_cap_enzyme_C"/>
</dbReference>
<dbReference type="InterPro" id="IPR051029">
    <property type="entry name" value="mRNA_Capping_Enz/RNA_Phosphat"/>
</dbReference>
<dbReference type="InterPro" id="IPR012340">
    <property type="entry name" value="NA-bd_OB-fold"/>
</dbReference>
<dbReference type="PANTHER" id="PTHR10367">
    <property type="entry name" value="MRNA-CAPPING ENZYME"/>
    <property type="match status" value="1"/>
</dbReference>
<dbReference type="PANTHER" id="PTHR10367:SF17">
    <property type="entry name" value="MRNA-CAPPING ENZYME"/>
    <property type="match status" value="1"/>
</dbReference>
<dbReference type="Pfam" id="PF03919">
    <property type="entry name" value="mRNA_cap_C"/>
    <property type="match status" value="1"/>
</dbReference>
<dbReference type="Pfam" id="PF01331">
    <property type="entry name" value="mRNA_cap_enzyme"/>
    <property type="match status" value="1"/>
</dbReference>
<dbReference type="PIRSF" id="PIRSF036959">
    <property type="entry name" value="mRNA_cap_alpha"/>
    <property type="match status" value="1"/>
</dbReference>
<dbReference type="SUPFAM" id="SSF56091">
    <property type="entry name" value="DNA ligase/mRNA capping enzyme, catalytic domain"/>
    <property type="match status" value="1"/>
</dbReference>
<dbReference type="SUPFAM" id="SSF50249">
    <property type="entry name" value="Nucleic acid-binding proteins"/>
    <property type="match status" value="1"/>
</dbReference>